<protein>
    <recommendedName>
        <fullName>Beta-hexosaminidase subunit beta</fullName>
        <ecNumber evidence="3">3.2.1.52</ecNumber>
    </recommendedName>
    <alternativeName>
        <fullName>Beta-GlcNAcase subunit beta</fullName>
    </alternativeName>
    <alternativeName>
        <fullName evidence="4">Beta-N-acetylhexosaminidase subunit beta</fullName>
    </alternativeName>
    <alternativeName>
        <fullName>N-acetyl-beta-glucosaminidase subunit beta</fullName>
    </alternativeName>
</protein>
<organism evidence="7">
    <name type="scientific">Entamoeba histolytica (strain ATCC 30459 / HM-1:IMSS / ABRM)</name>
    <dbReference type="NCBI Taxonomy" id="294381"/>
    <lineage>
        <taxon>Eukaryota</taxon>
        <taxon>Amoebozoa</taxon>
        <taxon>Evosea</taxon>
        <taxon>Archamoebae</taxon>
        <taxon>Mastigamoebida</taxon>
        <taxon>Entamoebidae</taxon>
        <taxon>Entamoeba</taxon>
    </lineage>
</organism>
<keyword id="KW-0903">Direct protein sequencing</keyword>
<keyword id="KW-0325">Glycoprotein</keyword>
<keyword id="KW-0326">Glycosidase</keyword>
<keyword id="KW-0378">Hydrolase</keyword>
<keyword id="KW-1185">Reference proteome</keyword>
<keyword id="KW-0964">Secreted</keyword>
<keyword id="KW-0732">Signal</keyword>
<gene>
    <name evidence="4" type="primary">HEXB</name>
    <name evidence="7" type="ORF">EHI_007330</name>
</gene>
<dbReference type="EC" id="3.2.1.52" evidence="3"/>
<dbReference type="EMBL" id="AJ417748">
    <property type="protein sequence ID" value="CAD10500.3"/>
    <property type="molecule type" value="Genomic_DNA"/>
</dbReference>
<dbReference type="EMBL" id="DS571323">
    <property type="protein sequence ID" value="EAL44887.2"/>
    <property type="molecule type" value="Genomic_DNA"/>
</dbReference>
<dbReference type="RefSeq" id="XP_650273.2">
    <property type="nucleotide sequence ID" value="XM_645181.2"/>
</dbReference>
<dbReference type="SMR" id="Q86M34"/>
<dbReference type="STRING" id="5759.C4M7C8"/>
<dbReference type="CAZy" id="GH20">
    <property type="family name" value="Glycoside Hydrolase Family 20"/>
</dbReference>
<dbReference type="GlyCosmos" id="Q86M34">
    <property type="glycosylation" value="1 site, No reported glycans"/>
</dbReference>
<dbReference type="EnsemblProtists" id="GAT97430">
    <property type="protein sequence ID" value="GAT97430"/>
    <property type="gene ID" value="CL6EHI_007330"/>
</dbReference>
<dbReference type="EnsemblProtists" id="rna_EHI_007330-1">
    <property type="protein sequence ID" value="rna_EHI_007330-1"/>
    <property type="gene ID" value="EHI_007330"/>
</dbReference>
<dbReference type="GeneID" id="3404575"/>
<dbReference type="KEGG" id="ehi:EHI_007330"/>
<dbReference type="VEuPathDB" id="AmoebaDB:EHI5A_038640"/>
<dbReference type="VEuPathDB" id="AmoebaDB:EHI7A_122380"/>
<dbReference type="VEuPathDB" id="AmoebaDB:EHI8A_195650"/>
<dbReference type="VEuPathDB" id="AmoebaDB:EHI_007330"/>
<dbReference type="VEuPathDB" id="AmoebaDB:KM1_199570"/>
<dbReference type="eggNOG" id="KOG2499">
    <property type="taxonomic scope" value="Eukaryota"/>
</dbReference>
<dbReference type="HOGENOM" id="CLU_007082_0_3_1"/>
<dbReference type="OMA" id="GHDVVMC"/>
<dbReference type="OrthoDB" id="428480at2759"/>
<dbReference type="Proteomes" id="UP000001926">
    <property type="component" value="Partially assembled WGS sequence"/>
</dbReference>
<dbReference type="GO" id="GO:0005576">
    <property type="term" value="C:extracellular region"/>
    <property type="evidence" value="ECO:0007669"/>
    <property type="project" value="UniProtKB-SubCell"/>
</dbReference>
<dbReference type="GO" id="GO:0005764">
    <property type="term" value="C:lysosome"/>
    <property type="evidence" value="ECO:0000318"/>
    <property type="project" value="GO_Central"/>
</dbReference>
<dbReference type="GO" id="GO:0016020">
    <property type="term" value="C:membrane"/>
    <property type="evidence" value="ECO:0000318"/>
    <property type="project" value="GO_Central"/>
</dbReference>
<dbReference type="GO" id="GO:0004563">
    <property type="term" value="F:beta-N-acetylhexosaminidase activity"/>
    <property type="evidence" value="ECO:0000318"/>
    <property type="project" value="GO_Central"/>
</dbReference>
<dbReference type="GO" id="GO:0005975">
    <property type="term" value="P:carbohydrate metabolic process"/>
    <property type="evidence" value="ECO:0007669"/>
    <property type="project" value="InterPro"/>
</dbReference>
<dbReference type="GO" id="GO:0030203">
    <property type="term" value="P:glycosaminoglycan metabolic process"/>
    <property type="evidence" value="ECO:0000318"/>
    <property type="project" value="GO_Central"/>
</dbReference>
<dbReference type="GO" id="GO:0006491">
    <property type="term" value="P:N-glycan processing"/>
    <property type="evidence" value="ECO:0000318"/>
    <property type="project" value="GO_Central"/>
</dbReference>
<dbReference type="Gene3D" id="3.30.379.10">
    <property type="entry name" value="Chitobiase/beta-hexosaminidase domain 2-like"/>
    <property type="match status" value="1"/>
</dbReference>
<dbReference type="Gene3D" id="3.20.20.80">
    <property type="entry name" value="Glycosidases"/>
    <property type="match status" value="1"/>
</dbReference>
<dbReference type="InterPro" id="IPR025705">
    <property type="entry name" value="Beta_hexosaminidase_sua/sub"/>
</dbReference>
<dbReference type="InterPro" id="IPR015883">
    <property type="entry name" value="Glyco_hydro_20_cat"/>
</dbReference>
<dbReference type="InterPro" id="IPR017853">
    <property type="entry name" value="Glycoside_hydrolase_SF"/>
</dbReference>
<dbReference type="InterPro" id="IPR029018">
    <property type="entry name" value="Hex-like_dom2"/>
</dbReference>
<dbReference type="InterPro" id="IPR029019">
    <property type="entry name" value="HEX_eukaryotic_N"/>
</dbReference>
<dbReference type="PANTHER" id="PTHR22600">
    <property type="entry name" value="BETA-HEXOSAMINIDASE"/>
    <property type="match status" value="1"/>
</dbReference>
<dbReference type="PANTHER" id="PTHR22600:SF21">
    <property type="entry name" value="BETA-HEXOSAMINIDASE A"/>
    <property type="match status" value="1"/>
</dbReference>
<dbReference type="Pfam" id="PF00728">
    <property type="entry name" value="Glyco_hydro_20"/>
    <property type="match status" value="1"/>
</dbReference>
<dbReference type="Pfam" id="PF14845">
    <property type="entry name" value="Glycohydro_20b2"/>
    <property type="match status" value="1"/>
</dbReference>
<dbReference type="PIRSF" id="PIRSF001093">
    <property type="entry name" value="B-hxosamndse_ab_euk"/>
    <property type="match status" value="1"/>
</dbReference>
<dbReference type="PRINTS" id="PR00738">
    <property type="entry name" value="GLHYDRLASE20"/>
</dbReference>
<dbReference type="SUPFAM" id="SSF51445">
    <property type="entry name" value="(Trans)glycosidases"/>
    <property type="match status" value="1"/>
</dbReference>
<dbReference type="SUPFAM" id="SSF55545">
    <property type="entry name" value="beta-N-acetylhexosaminidase-like domain"/>
    <property type="match status" value="1"/>
</dbReference>
<proteinExistence type="evidence at protein level"/>
<evidence type="ECO:0000250" key="1">
    <source>
        <dbReference type="UniProtKB" id="P07686"/>
    </source>
</evidence>
<evidence type="ECO:0000255" key="2">
    <source>
        <dbReference type="PROSITE-ProRule" id="PRU00498"/>
    </source>
</evidence>
<evidence type="ECO:0000269" key="3">
    <source>
    </source>
</evidence>
<evidence type="ECO:0000303" key="4">
    <source>
    </source>
</evidence>
<evidence type="ECO:0000305" key="5"/>
<evidence type="ECO:0000305" key="6">
    <source>
    </source>
</evidence>
<evidence type="ECO:0000312" key="7">
    <source>
        <dbReference type="EMBL" id="EAL44887.2"/>
    </source>
</evidence>
<sequence>MIVLLLLISYCFAGNGVNVKNQLLLMPYPTTVNAQFGSNDCVEATSNIKMVLSNNCQNDPNCLSFMTFNFNHTITYPLQRQRNLEDFRVSIFAPIDIEEMKGNVVYSANTVNIELTGNNIEEIYPPLKIGIDESYSLDVTKEGIKISATTVYGARLGLETLIQMLRPYQGKYIIKHIPIMIEDKPRLQWRGLMIDVARNSFSRSAFVKIINAMAAIKANVLHIHLSDAQTFMFESKEYPELSKKGAFFQNKVLTQSFIKQLVQYGAKRGVIVYPEIDTPAHTASWNAGYPGVVADIWDYIVSSSMRYGENVLALNPANEKTFSIIDALMKEMGEVFGNDYVHFGGDEVWTGAWSKAKEYPAILEWMNKKGINTLKELEAYFNKYAQEQIIKNGKTPVCWEEVYQKGSADKKTIIQVWNNVNLLKEAATAGYKVILSAGYYLDMQMPLCSDYVADSCTNPNHMWVWTNRDMYRNDPIKELDYATKQNVLGGEACSWDESVDEQNFFDRVFQRFSAVAERFWSSEDITDPESHEVRANYVRCLGLRRNFLKGTGPLYHSYCQLPEDI</sequence>
<name>HEXB_ENTH1</name>
<comment type="function">
    <text evidence="3 6">Hydrolyzes the non-reducing end N-acetyl-D-hexosamine and/or sulfated N-acetyl-D-hexosamine of glycoconjugates (PubMed:15555733). May contribute to amoebic pathogenicity and may be involved in the destruction of extracellular matrix components (Probable).</text>
</comment>
<comment type="catalytic activity">
    <reaction evidence="3">
        <text>Hydrolysis of terminal non-reducing N-acetyl-D-hexosamine residues in N-acetyl-beta-D-hexosaminides.</text>
        <dbReference type="EC" id="3.2.1.52"/>
    </reaction>
</comment>
<comment type="subunit">
    <text evidence="3">Heterodimer of one alpha subunit and one beta subunit.</text>
</comment>
<comment type="subcellular location">
    <subcellularLocation>
        <location evidence="3">Cytoplasmic granule</location>
    </subcellularLocation>
    <subcellularLocation>
        <location evidence="3">Secreted</location>
    </subcellularLocation>
</comment>
<comment type="developmental stage">
    <text evidence="3">Expressed in trophozoites (at protein level).</text>
</comment>
<comment type="PTM">
    <text evidence="3">Glycosylated.</text>
</comment>
<comment type="similarity">
    <text evidence="5">Belongs to the glycosyl hydrolase 20 family.</text>
</comment>
<reference key="1">
    <citation type="journal article" date="2004" name="Mol. Biochem. Parasitol.">
        <title>The beta-N-acetylhexosaminidase of Entamoeba histolytica is composed of two homologous chains and has been localized to cytoplasmic granules.</title>
        <authorList>
            <person name="Riekenberg S."/>
            <person name="Flockenhaus B."/>
            <person name="Vahrmann A."/>
            <person name="Mueller M.C.M."/>
            <person name="Leippe M."/>
            <person name="Kiess M."/>
            <person name="Scholze H.H."/>
        </authorList>
    </citation>
    <scope>NUCLEOTIDE SEQUENCE [MRNA]</scope>
    <scope>PROTEIN SEQUENCE OF 14-33; 146-155 AND 307-316</scope>
    <scope>FUNCTION</scope>
    <scope>CATALYTIC ACTIVITY</scope>
    <scope>INTERACTION WITH HEXA</scope>
    <scope>SUBCELLULAR LOCATION</scope>
    <scope>DEVELOPMENTAL STAGE</scope>
    <scope>GLYCOSYLATION</scope>
    <source>
        <strain>ATCC 30459 / HM-1:IMSS / ABRM</strain>
    </source>
</reference>
<reference evidence="7" key="2">
    <citation type="journal article" date="2005" name="Nature">
        <title>The genome of the protist parasite Entamoeba histolytica.</title>
        <authorList>
            <person name="Loftus B.J."/>
            <person name="Anderson I."/>
            <person name="Davies R."/>
            <person name="Alsmark U.C."/>
            <person name="Samuelson J."/>
            <person name="Amedeo P."/>
            <person name="Roncaglia P."/>
            <person name="Berriman M."/>
            <person name="Hirt R.P."/>
            <person name="Mann B.J."/>
            <person name="Nozaki T."/>
            <person name="Suh B."/>
            <person name="Pop M."/>
            <person name="Duchene M."/>
            <person name="Ackers J."/>
            <person name="Tannich E."/>
            <person name="Leippe M."/>
            <person name="Hofer M."/>
            <person name="Bruchhaus I."/>
            <person name="Willhoeft U."/>
            <person name="Bhattacharya A."/>
            <person name="Chillingworth T."/>
            <person name="Churcher C.M."/>
            <person name="Hance Z."/>
            <person name="Harris B."/>
            <person name="Harris D."/>
            <person name="Jagels K."/>
            <person name="Moule S."/>
            <person name="Mungall K.L."/>
            <person name="Ormond D."/>
            <person name="Squares R."/>
            <person name="Whitehead S."/>
            <person name="Quail M.A."/>
            <person name="Rabbinowitsch E."/>
            <person name="Norbertczak H."/>
            <person name="Price C."/>
            <person name="Wang Z."/>
            <person name="Guillen N."/>
            <person name="Gilchrist C."/>
            <person name="Stroup S.E."/>
            <person name="Bhattacharya S."/>
            <person name="Lohia A."/>
            <person name="Foster P.G."/>
            <person name="Sicheritz-Ponten T."/>
            <person name="Weber C."/>
            <person name="Singh U."/>
            <person name="Mukherjee C."/>
            <person name="El-Sayed N.M.A."/>
            <person name="Petri W.A."/>
            <person name="Clark C.G."/>
            <person name="Embley T.M."/>
            <person name="Barrell B.G."/>
            <person name="Fraser C.M."/>
            <person name="Hall N."/>
        </authorList>
    </citation>
    <scope>NUCLEOTIDE SEQUENCE [LARGE SCALE GENOMIC DNA]</scope>
    <source>
        <strain evidence="7">ATCC 30459 / HM-1:IMSS / ABRM</strain>
    </source>
</reference>
<feature type="signal peptide" evidence="3">
    <location>
        <begin position="1"/>
        <end position="13"/>
    </location>
</feature>
<feature type="chain" id="PRO_0000012012" description="Beta-hexosaminidase subunit beta">
    <location>
        <begin position="14"/>
        <end position="565"/>
    </location>
</feature>
<feature type="active site" description="Proton donor" evidence="1">
    <location>
        <position position="347"/>
    </location>
</feature>
<feature type="glycosylation site" description="N-linked (GlcNAc...) asparagine" evidence="2">
    <location>
        <position position="71"/>
    </location>
</feature>
<accession>Q86M34</accession>
<accession>A0A175JUI5</accession>
<accession>C4M7C8</accession>